<evidence type="ECO:0000250" key="1"/>
<evidence type="ECO:0000255" key="2">
    <source>
        <dbReference type="PROSITE-ProRule" id="PRU10009"/>
    </source>
</evidence>
<evidence type="ECO:0000305" key="3"/>
<accession>A2YQT7</accession>
<accession>Q42977</accession>
<accession>Q6ZK60</accession>
<sequence length="337" mass="36413">MGKIKIGINGFGRIGRLVARVALQSEDVELVAVNDPFITTDYMTYMFKYDTVHGQWKHSDIKIKDSKTLLLGEKPVTVFGIRNPDEIPWAEAGAEYVVESTGVFTDKEKAAAHLKGGAKKVVISAPSKDAPMFVCGVNEDKYTSDIDIVSNASCTTNCLAPLAKVIHDNFGIIEGLMTTVHAITATQKTVDGPSSKDWRGGRAASFNIIPSSTGAAKAVGKVLPDLNGKLTGMSFRVPTVDVSVVDLTVRIEKAASYDAIKSAIKSASEGKLKGIIGYVEEDLVSTDFVGDSRSSIFDAKAGIALNDNFVKLVAWYDNEWGYSNRVIDLIRHMAKTQ</sequence>
<proteinExistence type="evidence at transcript level"/>
<organism>
    <name type="scientific">Oryza sativa subsp. indica</name>
    <name type="common">Rice</name>
    <dbReference type="NCBI Taxonomy" id="39946"/>
    <lineage>
        <taxon>Eukaryota</taxon>
        <taxon>Viridiplantae</taxon>
        <taxon>Streptophyta</taxon>
        <taxon>Embryophyta</taxon>
        <taxon>Tracheophyta</taxon>
        <taxon>Spermatophyta</taxon>
        <taxon>Magnoliopsida</taxon>
        <taxon>Liliopsida</taxon>
        <taxon>Poales</taxon>
        <taxon>Poaceae</taxon>
        <taxon>BOP clade</taxon>
        <taxon>Oryzoideae</taxon>
        <taxon>Oryzeae</taxon>
        <taxon>Oryzinae</taxon>
        <taxon>Oryza</taxon>
        <taxon>Oryza sativa</taxon>
    </lineage>
</organism>
<gene>
    <name type="primary">GAPC</name>
    <name type="synonym">GPC</name>
    <name type="ORF">OsI_026680</name>
</gene>
<reference key="1">
    <citation type="submission" date="1995-09" db="EMBL/GenBank/DDBJ databases">
        <title>A cDNA encoding the GAPDH from rice.</title>
        <authorList>
            <person name="Xiao C."/>
            <person name="Jiang Y."/>
            <person name="Cao K."/>
        </authorList>
    </citation>
    <scope>NUCLEOTIDE SEQUENCE [MRNA]</scope>
    <source>
        <strain>cv. Guang-Lu-Ai No.4</strain>
        <tissue>Shoot</tissue>
    </source>
</reference>
<reference key="2">
    <citation type="journal article" date="2005" name="PLoS Biol.">
        <title>The genomes of Oryza sativa: a history of duplications.</title>
        <authorList>
            <person name="Yu J."/>
            <person name="Wang J."/>
            <person name="Lin W."/>
            <person name="Li S."/>
            <person name="Li H."/>
            <person name="Zhou J."/>
            <person name="Ni P."/>
            <person name="Dong W."/>
            <person name="Hu S."/>
            <person name="Zeng C."/>
            <person name="Zhang J."/>
            <person name="Zhang Y."/>
            <person name="Li R."/>
            <person name="Xu Z."/>
            <person name="Li S."/>
            <person name="Li X."/>
            <person name="Zheng H."/>
            <person name="Cong L."/>
            <person name="Lin L."/>
            <person name="Yin J."/>
            <person name="Geng J."/>
            <person name="Li G."/>
            <person name="Shi J."/>
            <person name="Liu J."/>
            <person name="Lv H."/>
            <person name="Li J."/>
            <person name="Wang J."/>
            <person name="Deng Y."/>
            <person name="Ran L."/>
            <person name="Shi X."/>
            <person name="Wang X."/>
            <person name="Wu Q."/>
            <person name="Li C."/>
            <person name="Ren X."/>
            <person name="Wang J."/>
            <person name="Wang X."/>
            <person name="Li D."/>
            <person name="Liu D."/>
            <person name="Zhang X."/>
            <person name="Ji Z."/>
            <person name="Zhao W."/>
            <person name="Sun Y."/>
            <person name="Zhang Z."/>
            <person name="Bao J."/>
            <person name="Han Y."/>
            <person name="Dong L."/>
            <person name="Ji J."/>
            <person name="Chen P."/>
            <person name="Wu S."/>
            <person name="Liu J."/>
            <person name="Xiao Y."/>
            <person name="Bu D."/>
            <person name="Tan J."/>
            <person name="Yang L."/>
            <person name="Ye C."/>
            <person name="Zhang J."/>
            <person name="Xu J."/>
            <person name="Zhou Y."/>
            <person name="Yu Y."/>
            <person name="Zhang B."/>
            <person name="Zhuang S."/>
            <person name="Wei H."/>
            <person name="Liu B."/>
            <person name="Lei M."/>
            <person name="Yu H."/>
            <person name="Li Y."/>
            <person name="Xu H."/>
            <person name="Wei S."/>
            <person name="He X."/>
            <person name="Fang L."/>
            <person name="Zhang Z."/>
            <person name="Zhang Y."/>
            <person name="Huang X."/>
            <person name="Su Z."/>
            <person name="Tong W."/>
            <person name="Li J."/>
            <person name="Tong Z."/>
            <person name="Li S."/>
            <person name="Ye J."/>
            <person name="Wang L."/>
            <person name="Fang L."/>
            <person name="Lei T."/>
            <person name="Chen C.-S."/>
            <person name="Chen H.-C."/>
            <person name="Xu Z."/>
            <person name="Li H."/>
            <person name="Huang H."/>
            <person name="Zhang F."/>
            <person name="Xu H."/>
            <person name="Li N."/>
            <person name="Zhao C."/>
            <person name="Li S."/>
            <person name="Dong L."/>
            <person name="Huang Y."/>
            <person name="Li L."/>
            <person name="Xi Y."/>
            <person name="Qi Q."/>
            <person name="Li W."/>
            <person name="Zhang B."/>
            <person name="Hu W."/>
            <person name="Zhang Y."/>
            <person name="Tian X."/>
            <person name="Jiao Y."/>
            <person name="Liang X."/>
            <person name="Jin J."/>
            <person name="Gao L."/>
            <person name="Zheng W."/>
            <person name="Hao B."/>
            <person name="Liu S.-M."/>
            <person name="Wang W."/>
            <person name="Yuan L."/>
            <person name="Cao M."/>
            <person name="McDermott J."/>
            <person name="Samudrala R."/>
            <person name="Wang J."/>
            <person name="Wong G.K.-S."/>
            <person name="Yang H."/>
        </authorList>
    </citation>
    <scope>NUCLEOTIDE SEQUENCE [LARGE SCALE GENOMIC DNA]</scope>
    <source>
        <strain>cv. 93-11</strain>
    </source>
</reference>
<name>G3PC_ORYSI</name>
<protein>
    <recommendedName>
        <fullName>Glyceraldehyde-3-phosphate dehydrogenase, cytosolic</fullName>
        <ecNumber>1.2.1.12</ecNumber>
    </recommendedName>
    <alternativeName>
        <fullName>PP38</fullName>
    </alternativeName>
</protein>
<dbReference type="EC" id="1.2.1.12"/>
<dbReference type="EMBL" id="U31676">
    <property type="protein sequence ID" value="AAA82047.1"/>
    <property type="molecule type" value="mRNA"/>
</dbReference>
<dbReference type="EMBL" id="CM000133">
    <property type="protein sequence ID" value="EAZ05448.1"/>
    <property type="molecule type" value="Genomic_DNA"/>
</dbReference>
<dbReference type="SMR" id="A2YQT7"/>
<dbReference type="STRING" id="39946.A2YQT7"/>
<dbReference type="iPTMnet" id="A2YQT7"/>
<dbReference type="EnsemblPlants" id="BGIOSGA027913-TA">
    <property type="protein sequence ID" value="BGIOSGA027913-PA"/>
    <property type="gene ID" value="BGIOSGA027913"/>
</dbReference>
<dbReference type="EnsemblPlants" id="OsGoSa_08g0001640.02">
    <property type="protein sequence ID" value="OsGoSa_08g0001640.02"/>
    <property type="gene ID" value="OsGoSa_08g0001640"/>
</dbReference>
<dbReference type="EnsemblPlants" id="OsIR64_08g0001550.01">
    <property type="protein sequence ID" value="OsIR64_08g0001550.01"/>
    <property type="gene ID" value="OsIR64_08g0001550"/>
</dbReference>
<dbReference type="EnsemblPlants" id="OsKYG_08g0001720.02">
    <property type="protein sequence ID" value="OsKYG_08g0001720.02"/>
    <property type="gene ID" value="OsKYG_08g0001720"/>
</dbReference>
<dbReference type="EnsemblPlants" id="OsLaMu_08g0001660.03">
    <property type="protein sequence ID" value="OsLaMu_08g0001660.03"/>
    <property type="gene ID" value="OsLaMu_08g0001660"/>
</dbReference>
<dbReference type="EnsemblPlants" id="OsLima_08g0001740.01">
    <property type="protein sequence ID" value="OsLima_08g0001740.01"/>
    <property type="gene ID" value="OsLima_08g0001740"/>
</dbReference>
<dbReference type="EnsemblPlants" id="OsLiXu_08g0001730.01">
    <property type="protein sequence ID" value="OsLiXu_08g0001730.01"/>
    <property type="gene ID" value="OsLiXu_08g0001730"/>
</dbReference>
<dbReference type="EnsemblPlants" id="OsMH63_08G001700_03">
    <property type="protein sequence ID" value="OsMH63_08G001700_03"/>
    <property type="gene ID" value="OsMH63_08G001700"/>
</dbReference>
<dbReference type="EnsemblPlants" id="OsPr106_08g0001660.02">
    <property type="protein sequence ID" value="OsPr106_08g0001660.02"/>
    <property type="gene ID" value="OsPr106_08g0001660"/>
</dbReference>
<dbReference type="EnsemblPlants" id="OsZS97_08G001730_01">
    <property type="protein sequence ID" value="OsZS97_08G001730_01"/>
    <property type="gene ID" value="OsZS97_08G001730"/>
</dbReference>
<dbReference type="Gramene" id="BGIOSGA027913-TA">
    <property type="protein sequence ID" value="BGIOSGA027913-PA"/>
    <property type="gene ID" value="BGIOSGA027913"/>
</dbReference>
<dbReference type="Gramene" id="OsGoSa_08g0001640.02">
    <property type="protein sequence ID" value="OsGoSa_08g0001640.02"/>
    <property type="gene ID" value="OsGoSa_08g0001640"/>
</dbReference>
<dbReference type="Gramene" id="OsIR64_08g0001550.01">
    <property type="protein sequence ID" value="OsIR64_08g0001550.01"/>
    <property type="gene ID" value="OsIR64_08g0001550"/>
</dbReference>
<dbReference type="Gramene" id="OsKYG_08g0001720.02">
    <property type="protein sequence ID" value="OsKYG_08g0001720.02"/>
    <property type="gene ID" value="OsKYG_08g0001720"/>
</dbReference>
<dbReference type="Gramene" id="OsLaMu_08g0001660.03">
    <property type="protein sequence ID" value="OsLaMu_08g0001660.03"/>
    <property type="gene ID" value="OsLaMu_08g0001660"/>
</dbReference>
<dbReference type="Gramene" id="OsLima_08g0001740.01">
    <property type="protein sequence ID" value="OsLima_08g0001740.01"/>
    <property type="gene ID" value="OsLima_08g0001740"/>
</dbReference>
<dbReference type="Gramene" id="OsLiXu_08g0001730.01">
    <property type="protein sequence ID" value="OsLiXu_08g0001730.01"/>
    <property type="gene ID" value="OsLiXu_08g0001730"/>
</dbReference>
<dbReference type="Gramene" id="OsMH63_08G001700_03">
    <property type="protein sequence ID" value="OsMH63_08G001700_03"/>
    <property type="gene ID" value="OsMH63_08G001700"/>
</dbReference>
<dbReference type="Gramene" id="OsPr106_08g0001660.02">
    <property type="protein sequence ID" value="OsPr106_08g0001660.02"/>
    <property type="gene ID" value="OsPr106_08g0001660"/>
</dbReference>
<dbReference type="Gramene" id="OsZS97_08G001730_01">
    <property type="protein sequence ID" value="OsZS97_08G001730_01"/>
    <property type="gene ID" value="OsZS97_08G001730"/>
</dbReference>
<dbReference type="HOGENOM" id="CLU_030140_0_3_1"/>
<dbReference type="OMA" id="IPWDKDG"/>
<dbReference type="OrthoDB" id="1152826at2759"/>
<dbReference type="UniPathway" id="UPA00109">
    <property type="reaction ID" value="UER00184"/>
</dbReference>
<dbReference type="Proteomes" id="UP000007015">
    <property type="component" value="Chromosome 8"/>
</dbReference>
<dbReference type="GO" id="GO:0005829">
    <property type="term" value="C:cytosol"/>
    <property type="evidence" value="ECO:0007669"/>
    <property type="project" value="TreeGrafter"/>
</dbReference>
<dbReference type="GO" id="GO:0004365">
    <property type="term" value="F:glyceraldehyde-3-phosphate dehydrogenase (NAD+) (phosphorylating) activity"/>
    <property type="evidence" value="ECO:0007669"/>
    <property type="project" value="UniProtKB-EC"/>
</dbReference>
<dbReference type="GO" id="GO:0051287">
    <property type="term" value="F:NAD binding"/>
    <property type="evidence" value="ECO:0007669"/>
    <property type="project" value="InterPro"/>
</dbReference>
<dbReference type="GO" id="GO:0050661">
    <property type="term" value="F:NADP binding"/>
    <property type="evidence" value="ECO:0007669"/>
    <property type="project" value="InterPro"/>
</dbReference>
<dbReference type="GO" id="GO:0006006">
    <property type="term" value="P:glucose metabolic process"/>
    <property type="evidence" value="ECO:0007669"/>
    <property type="project" value="InterPro"/>
</dbReference>
<dbReference type="GO" id="GO:0006096">
    <property type="term" value="P:glycolytic process"/>
    <property type="evidence" value="ECO:0007669"/>
    <property type="project" value="UniProtKB-UniPathway"/>
</dbReference>
<dbReference type="CDD" id="cd18126">
    <property type="entry name" value="GAPDH_I_C"/>
    <property type="match status" value="1"/>
</dbReference>
<dbReference type="CDD" id="cd05214">
    <property type="entry name" value="GAPDH_I_N"/>
    <property type="match status" value="1"/>
</dbReference>
<dbReference type="FunFam" id="3.30.360.10:FF:000001">
    <property type="entry name" value="Glyceraldehyde-3-phosphate dehydrogenase"/>
    <property type="match status" value="1"/>
</dbReference>
<dbReference type="FunFam" id="3.40.50.720:FF:000020">
    <property type="entry name" value="Glyceraldehyde-3-phosphate dehydrogenase"/>
    <property type="match status" value="1"/>
</dbReference>
<dbReference type="Gene3D" id="3.30.360.10">
    <property type="entry name" value="Dihydrodipicolinate Reductase, domain 2"/>
    <property type="match status" value="1"/>
</dbReference>
<dbReference type="Gene3D" id="3.40.50.720">
    <property type="entry name" value="NAD(P)-binding Rossmann-like Domain"/>
    <property type="match status" value="1"/>
</dbReference>
<dbReference type="InterPro" id="IPR020831">
    <property type="entry name" value="GlycerAld/Erythrose_P_DH"/>
</dbReference>
<dbReference type="InterPro" id="IPR020830">
    <property type="entry name" value="GlycerAld_3-P_DH_AS"/>
</dbReference>
<dbReference type="InterPro" id="IPR020829">
    <property type="entry name" value="GlycerAld_3-P_DH_cat"/>
</dbReference>
<dbReference type="InterPro" id="IPR020828">
    <property type="entry name" value="GlycerAld_3-P_DH_NAD(P)-bd"/>
</dbReference>
<dbReference type="InterPro" id="IPR006424">
    <property type="entry name" value="Glyceraldehyde-3-P_DH_1"/>
</dbReference>
<dbReference type="InterPro" id="IPR036291">
    <property type="entry name" value="NAD(P)-bd_dom_sf"/>
</dbReference>
<dbReference type="NCBIfam" id="TIGR01534">
    <property type="entry name" value="GAPDH-I"/>
    <property type="match status" value="1"/>
</dbReference>
<dbReference type="PANTHER" id="PTHR10836">
    <property type="entry name" value="GLYCERALDEHYDE 3-PHOSPHATE DEHYDROGENASE"/>
    <property type="match status" value="1"/>
</dbReference>
<dbReference type="PANTHER" id="PTHR10836:SF133">
    <property type="entry name" value="GLYCERALDEHYDE-3-PHOSPHATE DEHYDROGENASE 1, CYTOSOLIC"/>
    <property type="match status" value="1"/>
</dbReference>
<dbReference type="Pfam" id="PF02800">
    <property type="entry name" value="Gp_dh_C"/>
    <property type="match status" value="1"/>
</dbReference>
<dbReference type="Pfam" id="PF00044">
    <property type="entry name" value="Gp_dh_N"/>
    <property type="match status" value="1"/>
</dbReference>
<dbReference type="PIRSF" id="PIRSF000149">
    <property type="entry name" value="GAP_DH"/>
    <property type="match status" value="1"/>
</dbReference>
<dbReference type="PRINTS" id="PR00078">
    <property type="entry name" value="G3PDHDRGNASE"/>
</dbReference>
<dbReference type="SMART" id="SM00846">
    <property type="entry name" value="Gp_dh_N"/>
    <property type="match status" value="1"/>
</dbReference>
<dbReference type="SUPFAM" id="SSF55347">
    <property type="entry name" value="Glyceraldehyde-3-phosphate dehydrogenase-like, C-terminal domain"/>
    <property type="match status" value="1"/>
</dbReference>
<dbReference type="SUPFAM" id="SSF51735">
    <property type="entry name" value="NAD(P)-binding Rossmann-fold domains"/>
    <property type="match status" value="1"/>
</dbReference>
<dbReference type="PROSITE" id="PS00071">
    <property type="entry name" value="GAPDH"/>
    <property type="match status" value="1"/>
</dbReference>
<keyword id="KW-0963">Cytoplasm</keyword>
<keyword id="KW-0324">Glycolysis</keyword>
<keyword id="KW-0520">NAD</keyword>
<keyword id="KW-0560">Oxidoreductase</keyword>
<keyword id="KW-1185">Reference proteome</keyword>
<feature type="initiator methionine" description="Removed" evidence="1">
    <location>
        <position position="1"/>
    </location>
</feature>
<feature type="chain" id="PRO_0000295025" description="Glyceraldehyde-3-phosphate dehydrogenase, cytosolic">
    <location>
        <begin position="2"/>
        <end position="337"/>
    </location>
</feature>
<feature type="active site" description="Nucleophile" evidence="2">
    <location>
        <position position="154"/>
    </location>
</feature>
<feature type="binding site" evidence="1">
    <location>
        <begin position="13"/>
        <end position="14"/>
    </location>
    <ligand>
        <name>NAD(+)</name>
        <dbReference type="ChEBI" id="CHEBI:57540"/>
    </ligand>
</feature>
<feature type="binding site" evidence="1">
    <location>
        <position position="35"/>
    </location>
    <ligand>
        <name>NAD(+)</name>
        <dbReference type="ChEBI" id="CHEBI:57540"/>
    </ligand>
</feature>
<feature type="binding site" evidence="1">
    <location>
        <position position="82"/>
    </location>
    <ligand>
        <name>NAD(+)</name>
        <dbReference type="ChEBI" id="CHEBI:57540"/>
    </ligand>
</feature>
<feature type="binding site" evidence="1">
    <location>
        <begin position="153"/>
        <end position="155"/>
    </location>
    <ligand>
        <name>D-glyceraldehyde 3-phosphate</name>
        <dbReference type="ChEBI" id="CHEBI:59776"/>
    </ligand>
</feature>
<feature type="binding site" evidence="1">
    <location>
        <position position="184"/>
    </location>
    <ligand>
        <name>D-glyceraldehyde 3-phosphate</name>
        <dbReference type="ChEBI" id="CHEBI:59776"/>
    </ligand>
</feature>
<feature type="binding site" evidence="1">
    <location>
        <begin position="213"/>
        <end position="214"/>
    </location>
    <ligand>
        <name>D-glyceraldehyde 3-phosphate</name>
        <dbReference type="ChEBI" id="CHEBI:59776"/>
    </ligand>
</feature>
<feature type="binding site" evidence="1">
    <location>
        <position position="236"/>
    </location>
    <ligand>
        <name>D-glyceraldehyde 3-phosphate</name>
        <dbReference type="ChEBI" id="CHEBI:59776"/>
    </ligand>
</feature>
<feature type="binding site" evidence="1">
    <location>
        <position position="318"/>
    </location>
    <ligand>
        <name>NAD(+)</name>
        <dbReference type="ChEBI" id="CHEBI:57540"/>
    </ligand>
</feature>
<feature type="site" description="Activates thiol group during catalysis" evidence="1">
    <location>
        <position position="181"/>
    </location>
</feature>
<feature type="sequence conflict" description="In Ref. 1; AAA82047." evidence="3" ref="1">
    <original>AA</original>
    <variation>SS</variation>
    <location>
        <begin position="111"/>
        <end position="112"/>
    </location>
</feature>
<feature type="sequence conflict" description="In Ref. 1; AAA82047." evidence="3" ref="1">
    <original>V</original>
    <variation>F</variation>
    <location>
        <position position="122"/>
    </location>
</feature>
<comment type="function">
    <text evidence="1">Key enzyme in glycolysis that catalyzes the first step of the pathway by converting D-glyceraldehyde 3-phosphate (G3P) into 3-phospho-D-glyceroyl phosphate. Essential for the maintenance of cellular ATP levels and carbohydrate metabolism (By similarity).</text>
</comment>
<comment type="catalytic activity">
    <reaction evidence="2">
        <text>D-glyceraldehyde 3-phosphate + phosphate + NAD(+) = (2R)-3-phospho-glyceroyl phosphate + NADH + H(+)</text>
        <dbReference type="Rhea" id="RHEA:10300"/>
        <dbReference type="ChEBI" id="CHEBI:15378"/>
        <dbReference type="ChEBI" id="CHEBI:43474"/>
        <dbReference type="ChEBI" id="CHEBI:57540"/>
        <dbReference type="ChEBI" id="CHEBI:57604"/>
        <dbReference type="ChEBI" id="CHEBI:57945"/>
        <dbReference type="ChEBI" id="CHEBI:59776"/>
        <dbReference type="EC" id="1.2.1.12"/>
    </reaction>
</comment>
<comment type="pathway">
    <text>Carbohydrate degradation; glycolysis; pyruvate from D-glyceraldehyde 3-phosphate: step 1/5.</text>
</comment>
<comment type="subunit">
    <text evidence="1">Homotetramer.</text>
</comment>
<comment type="subcellular location">
    <subcellularLocation>
        <location evidence="1">Cytoplasm</location>
    </subcellularLocation>
</comment>
<comment type="miscellaneous">
    <text>Plants contain two types of GAPDH: cytosolic forms which participate in glycolysis and chloroplast forms which participate in photosynthesis. All the forms are encoded by distinct genes.</text>
</comment>
<comment type="similarity">
    <text evidence="3">Belongs to the glyceraldehyde-3-phosphate dehydrogenase family.</text>
</comment>